<feature type="chain" id="PRO_1000083803" description="ATP synthase gamma chain">
    <location>
        <begin position="1"/>
        <end position="290"/>
    </location>
</feature>
<gene>
    <name evidence="1" type="primary">atpG</name>
    <name type="ordered locus">Rcas_1266</name>
</gene>
<comment type="function">
    <text evidence="1">Produces ATP from ADP in the presence of a proton gradient across the membrane. The gamma chain is believed to be important in regulating ATPase activity and the flow of protons through the CF(0) complex.</text>
</comment>
<comment type="subunit">
    <text evidence="1">F-type ATPases have 2 components, CF(1) - the catalytic core - and CF(0) - the membrane proton channel. CF(1) has five subunits: alpha(3), beta(3), gamma(1), delta(1), epsilon(1). CF(0) has three main subunits: a, b and c.</text>
</comment>
<comment type="subcellular location">
    <subcellularLocation>
        <location evidence="1">Cell membrane</location>
        <topology evidence="1">Peripheral membrane protein</topology>
    </subcellularLocation>
</comment>
<comment type="similarity">
    <text evidence="1">Belongs to the ATPase gamma chain family.</text>
</comment>
<dbReference type="EMBL" id="CP000804">
    <property type="protein sequence ID" value="ABU57363.1"/>
    <property type="molecule type" value="Genomic_DNA"/>
</dbReference>
<dbReference type="RefSeq" id="WP_012119793.1">
    <property type="nucleotide sequence ID" value="NC_009767.1"/>
</dbReference>
<dbReference type="SMR" id="A7NIR0"/>
<dbReference type="STRING" id="383372.Rcas_1266"/>
<dbReference type="KEGG" id="rca:Rcas_1266"/>
<dbReference type="eggNOG" id="COG0224">
    <property type="taxonomic scope" value="Bacteria"/>
</dbReference>
<dbReference type="HOGENOM" id="CLU_050669_0_1_0"/>
<dbReference type="OrthoDB" id="9812769at2"/>
<dbReference type="Proteomes" id="UP000000263">
    <property type="component" value="Chromosome"/>
</dbReference>
<dbReference type="GO" id="GO:0005886">
    <property type="term" value="C:plasma membrane"/>
    <property type="evidence" value="ECO:0007669"/>
    <property type="project" value="UniProtKB-SubCell"/>
</dbReference>
<dbReference type="GO" id="GO:0045259">
    <property type="term" value="C:proton-transporting ATP synthase complex"/>
    <property type="evidence" value="ECO:0007669"/>
    <property type="project" value="UniProtKB-KW"/>
</dbReference>
<dbReference type="GO" id="GO:0005524">
    <property type="term" value="F:ATP binding"/>
    <property type="evidence" value="ECO:0007669"/>
    <property type="project" value="UniProtKB-UniRule"/>
</dbReference>
<dbReference type="GO" id="GO:0046933">
    <property type="term" value="F:proton-transporting ATP synthase activity, rotational mechanism"/>
    <property type="evidence" value="ECO:0007669"/>
    <property type="project" value="UniProtKB-UniRule"/>
</dbReference>
<dbReference type="GO" id="GO:0042777">
    <property type="term" value="P:proton motive force-driven plasma membrane ATP synthesis"/>
    <property type="evidence" value="ECO:0007669"/>
    <property type="project" value="UniProtKB-UniRule"/>
</dbReference>
<dbReference type="CDD" id="cd12151">
    <property type="entry name" value="F1-ATPase_gamma"/>
    <property type="match status" value="1"/>
</dbReference>
<dbReference type="Gene3D" id="3.40.1380.10">
    <property type="match status" value="1"/>
</dbReference>
<dbReference type="Gene3D" id="1.10.287.80">
    <property type="entry name" value="ATP synthase, gamma subunit, helix hairpin domain"/>
    <property type="match status" value="2"/>
</dbReference>
<dbReference type="HAMAP" id="MF_00815">
    <property type="entry name" value="ATP_synth_gamma_bact"/>
    <property type="match status" value="1"/>
</dbReference>
<dbReference type="InterPro" id="IPR035968">
    <property type="entry name" value="ATP_synth_F1_ATPase_gsu"/>
</dbReference>
<dbReference type="InterPro" id="IPR000131">
    <property type="entry name" value="ATP_synth_F1_gsu"/>
</dbReference>
<dbReference type="InterPro" id="IPR023632">
    <property type="entry name" value="ATP_synth_F1_gsu_CS"/>
</dbReference>
<dbReference type="NCBIfam" id="TIGR01146">
    <property type="entry name" value="ATPsyn_F1gamma"/>
    <property type="match status" value="1"/>
</dbReference>
<dbReference type="NCBIfam" id="NF010709">
    <property type="entry name" value="PRK14111.1"/>
    <property type="match status" value="1"/>
</dbReference>
<dbReference type="PANTHER" id="PTHR11693">
    <property type="entry name" value="ATP SYNTHASE GAMMA CHAIN"/>
    <property type="match status" value="1"/>
</dbReference>
<dbReference type="PANTHER" id="PTHR11693:SF22">
    <property type="entry name" value="ATP SYNTHASE SUBUNIT GAMMA, MITOCHONDRIAL"/>
    <property type="match status" value="1"/>
</dbReference>
<dbReference type="Pfam" id="PF00231">
    <property type="entry name" value="ATP-synt"/>
    <property type="match status" value="1"/>
</dbReference>
<dbReference type="PRINTS" id="PR00126">
    <property type="entry name" value="ATPASEGAMMA"/>
</dbReference>
<dbReference type="SUPFAM" id="SSF52943">
    <property type="entry name" value="ATP synthase (F1-ATPase), gamma subunit"/>
    <property type="match status" value="1"/>
</dbReference>
<dbReference type="PROSITE" id="PS00153">
    <property type="entry name" value="ATPASE_GAMMA"/>
    <property type="match status" value="1"/>
</dbReference>
<keyword id="KW-0066">ATP synthesis</keyword>
<keyword id="KW-1003">Cell membrane</keyword>
<keyword id="KW-0139">CF(1)</keyword>
<keyword id="KW-0375">Hydrogen ion transport</keyword>
<keyword id="KW-0406">Ion transport</keyword>
<keyword id="KW-0472">Membrane</keyword>
<keyword id="KW-1185">Reference proteome</keyword>
<keyword id="KW-0813">Transport</keyword>
<protein>
    <recommendedName>
        <fullName evidence="1">ATP synthase gamma chain</fullName>
    </recommendedName>
    <alternativeName>
        <fullName evidence="1">ATP synthase F1 sector gamma subunit</fullName>
    </alternativeName>
    <alternativeName>
        <fullName evidence="1">F-ATPase gamma subunit</fullName>
    </alternativeName>
</protein>
<name>ATPG_ROSCS</name>
<organism>
    <name type="scientific">Roseiflexus castenholzii (strain DSM 13941 / HLO8)</name>
    <dbReference type="NCBI Taxonomy" id="383372"/>
    <lineage>
        <taxon>Bacteria</taxon>
        <taxon>Bacillati</taxon>
        <taxon>Chloroflexota</taxon>
        <taxon>Chloroflexia</taxon>
        <taxon>Chloroflexales</taxon>
        <taxon>Roseiflexineae</taxon>
        <taxon>Roseiflexaceae</taxon>
        <taxon>Roseiflexus</taxon>
    </lineage>
</organism>
<sequence>MPSTREIRRRIRSVKNLAQITRAMEMVSASKMRRAQRNVLATRPYADRLLDVMGELTGRAVGMRRGTLLEVRPVVKGVALIVVTPDRGLAGSLVANVLRRASRFILDEQEKKHTVEVLAIGKKGRDFMVRTRQNLVAEVTKLGDYPRLTDILGIATNVINGFLSGRYDEVYVLYSQFVNTLVQRPTIKRLLPIDPPHEPAERMVDYTYEPSQEEVLRALLPRFVEVQLYQAVLEAIASEHSARMVAMRNATDNAKELQRDLTLSYNKTRQANITKEVSEIASGAAALAEM</sequence>
<accession>A7NIR0</accession>
<reference key="1">
    <citation type="submission" date="2007-08" db="EMBL/GenBank/DDBJ databases">
        <title>Complete sequence of Roseiflexus castenholzii DSM 13941.</title>
        <authorList>
            <consortium name="US DOE Joint Genome Institute"/>
            <person name="Copeland A."/>
            <person name="Lucas S."/>
            <person name="Lapidus A."/>
            <person name="Barry K."/>
            <person name="Glavina del Rio T."/>
            <person name="Dalin E."/>
            <person name="Tice H."/>
            <person name="Pitluck S."/>
            <person name="Thompson L.S."/>
            <person name="Brettin T."/>
            <person name="Bruce D."/>
            <person name="Detter J.C."/>
            <person name="Han C."/>
            <person name="Tapia R."/>
            <person name="Schmutz J."/>
            <person name="Larimer F."/>
            <person name="Land M."/>
            <person name="Hauser L."/>
            <person name="Kyrpides N."/>
            <person name="Mikhailova N."/>
            <person name="Bryant D.A."/>
            <person name="Hanada S."/>
            <person name="Tsukatani Y."/>
            <person name="Richardson P."/>
        </authorList>
    </citation>
    <scope>NUCLEOTIDE SEQUENCE [LARGE SCALE GENOMIC DNA]</scope>
    <source>
        <strain>DSM 13941 / HLO8</strain>
    </source>
</reference>
<evidence type="ECO:0000255" key="1">
    <source>
        <dbReference type="HAMAP-Rule" id="MF_00815"/>
    </source>
</evidence>
<proteinExistence type="inferred from homology"/>